<accession>Q8Z5K0</accession>
<accession>Q8GKY3</accession>
<accession>Q8GKY4</accession>
<organism>
    <name type="scientific">Salmonella typhi</name>
    <dbReference type="NCBI Taxonomy" id="90370"/>
    <lineage>
        <taxon>Bacteria</taxon>
        <taxon>Pseudomonadati</taxon>
        <taxon>Pseudomonadota</taxon>
        <taxon>Gammaproteobacteria</taxon>
        <taxon>Enterobacterales</taxon>
        <taxon>Enterobacteriaceae</taxon>
        <taxon>Salmonella</taxon>
    </lineage>
</organism>
<comment type="function">
    <text evidence="2">Catalyzes the sequential NAD-dependent oxidations of L-histidinol to L-histidinaldehyde and then to L-histidine.</text>
</comment>
<comment type="catalytic activity">
    <reaction evidence="2">
        <text>L-histidinol + 2 NAD(+) + H2O = L-histidine + 2 NADH + 3 H(+)</text>
        <dbReference type="Rhea" id="RHEA:20641"/>
        <dbReference type="ChEBI" id="CHEBI:15377"/>
        <dbReference type="ChEBI" id="CHEBI:15378"/>
        <dbReference type="ChEBI" id="CHEBI:57540"/>
        <dbReference type="ChEBI" id="CHEBI:57595"/>
        <dbReference type="ChEBI" id="CHEBI:57699"/>
        <dbReference type="ChEBI" id="CHEBI:57945"/>
        <dbReference type="EC" id="1.1.1.23"/>
    </reaction>
</comment>
<comment type="cofactor">
    <cofactor evidence="2">
        <name>Zn(2+)</name>
        <dbReference type="ChEBI" id="CHEBI:29105"/>
    </cofactor>
    <text evidence="2">Binds 1 zinc ion per subunit.</text>
</comment>
<comment type="pathway">
    <text evidence="2">Amino-acid biosynthesis; L-histidine biosynthesis; L-histidine from 5-phospho-alpha-D-ribose 1-diphosphate: step 9/9.</text>
</comment>
<comment type="subunit">
    <text evidence="2">Homodimer.</text>
</comment>
<comment type="similarity">
    <text evidence="2">Belongs to the histidinol dehydrogenase family.</text>
</comment>
<evidence type="ECO:0000250" key="1"/>
<evidence type="ECO:0000255" key="2">
    <source>
        <dbReference type="HAMAP-Rule" id="MF_01024"/>
    </source>
</evidence>
<evidence type="ECO:0000305" key="3"/>
<gene>
    <name evidence="2" type="primary">hisD</name>
    <name type="ordered locus">STY2281</name>
    <name type="ordered locus">t0801</name>
</gene>
<name>HISX_SALTI</name>
<keyword id="KW-0028">Amino-acid biosynthesis</keyword>
<keyword id="KW-0368">Histidine biosynthesis</keyword>
<keyword id="KW-0479">Metal-binding</keyword>
<keyword id="KW-0520">NAD</keyword>
<keyword id="KW-0560">Oxidoreductase</keyword>
<keyword id="KW-0862">Zinc</keyword>
<proteinExistence type="inferred from homology"/>
<feature type="initiator methionine" description="Removed" evidence="1">
    <location>
        <position position="1"/>
    </location>
</feature>
<feature type="chain" id="PRO_0000135839" description="Histidinol dehydrogenase">
    <location>
        <begin position="2"/>
        <end position="434"/>
    </location>
</feature>
<feature type="active site" description="Proton acceptor" evidence="2">
    <location>
        <position position="326"/>
    </location>
</feature>
<feature type="active site" description="Proton acceptor" evidence="2">
    <location>
        <position position="327"/>
    </location>
</feature>
<feature type="binding site" evidence="2">
    <location>
        <position position="130"/>
    </location>
    <ligand>
        <name>NAD(+)</name>
        <dbReference type="ChEBI" id="CHEBI:57540"/>
    </ligand>
</feature>
<feature type="binding site" evidence="2">
    <location>
        <position position="188"/>
    </location>
    <ligand>
        <name>NAD(+)</name>
        <dbReference type="ChEBI" id="CHEBI:57540"/>
    </ligand>
</feature>
<feature type="binding site" evidence="2">
    <location>
        <position position="211"/>
    </location>
    <ligand>
        <name>NAD(+)</name>
        <dbReference type="ChEBI" id="CHEBI:57540"/>
    </ligand>
</feature>
<feature type="binding site" evidence="2">
    <location>
        <position position="237"/>
    </location>
    <ligand>
        <name>substrate</name>
    </ligand>
</feature>
<feature type="binding site" evidence="2">
    <location>
        <position position="259"/>
    </location>
    <ligand>
        <name>substrate</name>
    </ligand>
</feature>
<feature type="binding site" evidence="2">
    <location>
        <position position="259"/>
    </location>
    <ligand>
        <name>Zn(2+)</name>
        <dbReference type="ChEBI" id="CHEBI:29105"/>
    </ligand>
</feature>
<feature type="binding site" evidence="2">
    <location>
        <position position="262"/>
    </location>
    <ligand>
        <name>substrate</name>
    </ligand>
</feature>
<feature type="binding site" evidence="2">
    <location>
        <position position="262"/>
    </location>
    <ligand>
        <name>Zn(2+)</name>
        <dbReference type="ChEBI" id="CHEBI:29105"/>
    </ligand>
</feature>
<feature type="binding site" evidence="2">
    <location>
        <position position="327"/>
    </location>
    <ligand>
        <name>substrate</name>
    </ligand>
</feature>
<feature type="binding site" evidence="2">
    <location>
        <position position="360"/>
    </location>
    <ligand>
        <name>substrate</name>
    </ligand>
</feature>
<feature type="binding site" evidence="2">
    <location>
        <position position="360"/>
    </location>
    <ligand>
        <name>Zn(2+)</name>
        <dbReference type="ChEBI" id="CHEBI:29105"/>
    </ligand>
</feature>
<feature type="binding site" evidence="2">
    <location>
        <position position="414"/>
    </location>
    <ligand>
        <name>substrate</name>
    </ligand>
</feature>
<feature type="binding site" evidence="2">
    <location>
        <position position="419"/>
    </location>
    <ligand>
        <name>substrate</name>
    </ligand>
</feature>
<feature type="binding site" evidence="2">
    <location>
        <position position="419"/>
    </location>
    <ligand>
        <name>Zn(2+)</name>
        <dbReference type="ChEBI" id="CHEBI:29105"/>
    </ligand>
</feature>
<feature type="sequence conflict" description="In Ref. 3; AAN39867." evidence="3" ref="3">
    <original>T</original>
    <variation>I</variation>
    <location>
        <position position="248"/>
    </location>
</feature>
<protein>
    <recommendedName>
        <fullName evidence="2">Histidinol dehydrogenase</fullName>
        <shortName evidence="2">HDH</shortName>
        <ecNumber evidence="2">1.1.1.23</ecNumber>
    </recommendedName>
</protein>
<dbReference type="EC" id="1.1.1.23" evidence="2"/>
<dbReference type="EMBL" id="AL513382">
    <property type="protein sequence ID" value="CAD02434.1"/>
    <property type="molecule type" value="Genomic_DNA"/>
</dbReference>
<dbReference type="EMBL" id="AE014613">
    <property type="protein sequence ID" value="AAO68492.1"/>
    <property type="molecule type" value="Genomic_DNA"/>
</dbReference>
<dbReference type="EMBL" id="AY142232">
    <property type="protein sequence ID" value="AAN39867.1"/>
    <property type="molecule type" value="Genomic_DNA"/>
</dbReference>
<dbReference type="EMBL" id="AY142233">
    <property type="protein sequence ID" value="AAN39868.1"/>
    <property type="molecule type" value="Genomic_DNA"/>
</dbReference>
<dbReference type="RefSeq" id="NP_456620.1">
    <property type="nucleotide sequence ID" value="NC_003198.1"/>
</dbReference>
<dbReference type="RefSeq" id="WP_000009629.1">
    <property type="nucleotide sequence ID" value="NZ_WSUR01000002.1"/>
</dbReference>
<dbReference type="SMR" id="Q8Z5K0"/>
<dbReference type="STRING" id="220341.gene:17586189"/>
<dbReference type="KEGG" id="stt:t0801"/>
<dbReference type="KEGG" id="sty:STY2281"/>
<dbReference type="PATRIC" id="fig|220341.7.peg.2301"/>
<dbReference type="eggNOG" id="COG0141">
    <property type="taxonomic scope" value="Bacteria"/>
</dbReference>
<dbReference type="HOGENOM" id="CLU_006732_3_0_6"/>
<dbReference type="OMA" id="YIAGPNH"/>
<dbReference type="OrthoDB" id="9805269at2"/>
<dbReference type="UniPathway" id="UPA00031">
    <property type="reaction ID" value="UER00014"/>
</dbReference>
<dbReference type="Proteomes" id="UP000000541">
    <property type="component" value="Chromosome"/>
</dbReference>
<dbReference type="Proteomes" id="UP000002670">
    <property type="component" value="Chromosome"/>
</dbReference>
<dbReference type="GO" id="GO:0005829">
    <property type="term" value="C:cytosol"/>
    <property type="evidence" value="ECO:0007669"/>
    <property type="project" value="TreeGrafter"/>
</dbReference>
<dbReference type="GO" id="GO:0004399">
    <property type="term" value="F:histidinol dehydrogenase activity"/>
    <property type="evidence" value="ECO:0007669"/>
    <property type="project" value="UniProtKB-UniRule"/>
</dbReference>
<dbReference type="GO" id="GO:0051287">
    <property type="term" value="F:NAD binding"/>
    <property type="evidence" value="ECO:0007669"/>
    <property type="project" value="InterPro"/>
</dbReference>
<dbReference type="GO" id="GO:0008270">
    <property type="term" value="F:zinc ion binding"/>
    <property type="evidence" value="ECO:0007669"/>
    <property type="project" value="UniProtKB-UniRule"/>
</dbReference>
<dbReference type="GO" id="GO:0000105">
    <property type="term" value="P:L-histidine biosynthetic process"/>
    <property type="evidence" value="ECO:0007669"/>
    <property type="project" value="UniProtKB-UniRule"/>
</dbReference>
<dbReference type="CDD" id="cd06572">
    <property type="entry name" value="Histidinol_dh"/>
    <property type="match status" value="1"/>
</dbReference>
<dbReference type="FunFam" id="1.20.5.1300:FF:000001">
    <property type="entry name" value="Histidine biosynthesis trifunctional protein"/>
    <property type="match status" value="1"/>
</dbReference>
<dbReference type="FunFam" id="3.40.50.1980:FF:000001">
    <property type="entry name" value="Histidinol dehydrogenase"/>
    <property type="match status" value="1"/>
</dbReference>
<dbReference type="Gene3D" id="1.20.5.1300">
    <property type="match status" value="1"/>
</dbReference>
<dbReference type="Gene3D" id="3.40.50.1980">
    <property type="entry name" value="Nitrogenase molybdenum iron protein domain"/>
    <property type="match status" value="2"/>
</dbReference>
<dbReference type="HAMAP" id="MF_01024">
    <property type="entry name" value="HisD"/>
    <property type="match status" value="1"/>
</dbReference>
<dbReference type="InterPro" id="IPR016161">
    <property type="entry name" value="Ald_DH/histidinol_DH"/>
</dbReference>
<dbReference type="InterPro" id="IPR001692">
    <property type="entry name" value="Histidinol_DH_CS"/>
</dbReference>
<dbReference type="InterPro" id="IPR022695">
    <property type="entry name" value="Histidinol_DH_monofunct"/>
</dbReference>
<dbReference type="InterPro" id="IPR012131">
    <property type="entry name" value="Hstdl_DH"/>
</dbReference>
<dbReference type="NCBIfam" id="TIGR00069">
    <property type="entry name" value="hisD"/>
    <property type="match status" value="1"/>
</dbReference>
<dbReference type="PANTHER" id="PTHR21256:SF2">
    <property type="entry name" value="HISTIDINE BIOSYNTHESIS TRIFUNCTIONAL PROTEIN"/>
    <property type="match status" value="1"/>
</dbReference>
<dbReference type="PANTHER" id="PTHR21256">
    <property type="entry name" value="HISTIDINOL DEHYDROGENASE HDH"/>
    <property type="match status" value="1"/>
</dbReference>
<dbReference type="Pfam" id="PF00815">
    <property type="entry name" value="Histidinol_dh"/>
    <property type="match status" value="1"/>
</dbReference>
<dbReference type="PIRSF" id="PIRSF000099">
    <property type="entry name" value="Histidinol_dh"/>
    <property type="match status" value="1"/>
</dbReference>
<dbReference type="PRINTS" id="PR00083">
    <property type="entry name" value="HOLDHDRGNASE"/>
</dbReference>
<dbReference type="SUPFAM" id="SSF53720">
    <property type="entry name" value="ALDH-like"/>
    <property type="match status" value="1"/>
</dbReference>
<dbReference type="PROSITE" id="PS00611">
    <property type="entry name" value="HISOL_DEHYDROGENASE"/>
    <property type="match status" value="1"/>
</dbReference>
<reference key="1">
    <citation type="journal article" date="2001" name="Nature">
        <title>Complete genome sequence of a multiple drug resistant Salmonella enterica serovar Typhi CT18.</title>
        <authorList>
            <person name="Parkhill J."/>
            <person name="Dougan G."/>
            <person name="James K.D."/>
            <person name="Thomson N.R."/>
            <person name="Pickard D."/>
            <person name="Wain J."/>
            <person name="Churcher C.M."/>
            <person name="Mungall K.L."/>
            <person name="Bentley S.D."/>
            <person name="Holden M.T.G."/>
            <person name="Sebaihia M."/>
            <person name="Baker S."/>
            <person name="Basham D."/>
            <person name="Brooks K."/>
            <person name="Chillingworth T."/>
            <person name="Connerton P."/>
            <person name="Cronin A."/>
            <person name="Davis P."/>
            <person name="Davies R.M."/>
            <person name="Dowd L."/>
            <person name="White N."/>
            <person name="Farrar J."/>
            <person name="Feltwell T."/>
            <person name="Hamlin N."/>
            <person name="Haque A."/>
            <person name="Hien T.T."/>
            <person name="Holroyd S."/>
            <person name="Jagels K."/>
            <person name="Krogh A."/>
            <person name="Larsen T.S."/>
            <person name="Leather S."/>
            <person name="Moule S."/>
            <person name="O'Gaora P."/>
            <person name="Parry C."/>
            <person name="Quail M.A."/>
            <person name="Rutherford K.M."/>
            <person name="Simmonds M."/>
            <person name="Skelton J."/>
            <person name="Stevens K."/>
            <person name="Whitehead S."/>
            <person name="Barrell B.G."/>
        </authorList>
    </citation>
    <scope>NUCLEOTIDE SEQUENCE [LARGE SCALE GENOMIC DNA]</scope>
    <source>
        <strain>CT18</strain>
    </source>
</reference>
<reference key="2">
    <citation type="journal article" date="2003" name="J. Bacteriol.">
        <title>Comparative genomics of Salmonella enterica serovar Typhi strains Ty2 and CT18.</title>
        <authorList>
            <person name="Deng W."/>
            <person name="Liou S.-R."/>
            <person name="Plunkett G. III"/>
            <person name="Mayhew G.F."/>
            <person name="Rose D.J."/>
            <person name="Burland V."/>
            <person name="Kodoyianni V."/>
            <person name="Schwartz D.C."/>
            <person name="Blattner F.R."/>
        </authorList>
    </citation>
    <scope>NUCLEOTIDE SEQUENCE [LARGE SCALE GENOMIC DNA]</scope>
    <source>
        <strain>ATCC 700931 / Ty2</strain>
    </source>
</reference>
<reference key="3">
    <citation type="journal article" date="2002" name="Infect. Genet. Evol.">
        <title>Salmonella typhi, the causative agent of typhoid fever, is approximately 50,000 years old.</title>
        <authorList>
            <person name="Kidgell C."/>
            <person name="Reichard U."/>
            <person name="Wain J."/>
            <person name="Linz B."/>
            <person name="Torpdahl M."/>
            <person name="Dougan G."/>
            <person name="Achtman M."/>
        </authorList>
    </citation>
    <scope>NUCLEOTIDE SEQUENCE [GENOMIC DNA] OF 152-318</scope>
</reference>
<sequence length="434" mass="45833">MSFNTLIDWNSCSPEQQRALLTRPAISASDSITRTVSDILYNVKTRGDDALREYSAKFDKTEVTALRVTPEEIAAAGARLSDELKQAMAAAVKNIETFHSAQTLPPVDVETQPGVRCQQVTRPVASVGLYIPGGSAPLFSTVLMLATPARIAGCQKVVLCSPPPIADEILYAAQLCGVQEIFNVGGAQAIAALAFGSESVPKVDKIFGPGNAFVTEAKRQVSQRLDGAAIDMPAGPSEVLVIADSGATPDFVASDLLSQAEHGPDSQVILLTPDADIARKVAEAVERQLAELPRAGTARQALSASRLIVTKDLAQCVAISNQYGPEHLIIQTRNARDLVDAITSAGSVFLGDWSPESAGDYASGTNHVLPTYGYTATCSSLGLADFQKRMTVQELSKAGFSALASTIETLAAAERLTAHKNAVTLRVNALKEQA</sequence>